<reference key="1">
    <citation type="journal article" date="2002" name="Hum. Genet.">
        <title>Identification of additional transcripts in the Williams-Beuren syndrome critical region.</title>
        <authorList>
            <person name="Merla G."/>
            <person name="Ucla C."/>
            <person name="Guipponi M."/>
            <person name="Reymond A."/>
        </authorList>
    </citation>
    <scope>NUCLEOTIDE SEQUENCE [MRNA] (ISOFORMS 1; 2; 3; 4 AND 5)</scope>
    <scope>TISSUE SPECIFICITY</scope>
</reference>
<reference key="2">
    <citation type="journal article" date="2004" name="Proc. Natl. Acad. Sci. U.S.A.">
        <title>Large-scale cDNA transfection screening for genes related to cancer development and progression.</title>
        <authorList>
            <person name="Wan D."/>
            <person name="Gong Y."/>
            <person name="Qin W."/>
            <person name="Zhang P."/>
            <person name="Li J."/>
            <person name="Wei L."/>
            <person name="Zhou X."/>
            <person name="Li H."/>
            <person name="Qiu X."/>
            <person name="Zhong F."/>
            <person name="He L."/>
            <person name="Yu J."/>
            <person name="Yao G."/>
            <person name="Jiang H."/>
            <person name="Qian L."/>
            <person name="Yu Y."/>
            <person name="Shu H."/>
            <person name="Chen X."/>
            <person name="Xu H."/>
            <person name="Guo M."/>
            <person name="Pan Z."/>
            <person name="Chen Y."/>
            <person name="Ge C."/>
            <person name="Yang S."/>
            <person name="Gu J."/>
        </authorList>
    </citation>
    <scope>NUCLEOTIDE SEQUENCE [LARGE SCALE MRNA] (ISOFORM 2)</scope>
</reference>
<reference key="3">
    <citation type="journal article" date="2003" name="Nature">
        <title>The DNA sequence of human chromosome 7.</title>
        <authorList>
            <person name="Hillier L.W."/>
            <person name="Fulton R.S."/>
            <person name="Fulton L.A."/>
            <person name="Graves T.A."/>
            <person name="Pepin K.H."/>
            <person name="Wagner-McPherson C."/>
            <person name="Layman D."/>
            <person name="Maas J."/>
            <person name="Jaeger S."/>
            <person name="Walker R."/>
            <person name="Wylie K."/>
            <person name="Sekhon M."/>
            <person name="Becker M.C."/>
            <person name="O'Laughlin M.D."/>
            <person name="Schaller M.E."/>
            <person name="Fewell G.A."/>
            <person name="Delehaunty K.D."/>
            <person name="Miner T.L."/>
            <person name="Nash W.E."/>
            <person name="Cordes M."/>
            <person name="Du H."/>
            <person name="Sun H."/>
            <person name="Edwards J."/>
            <person name="Bradshaw-Cordum H."/>
            <person name="Ali J."/>
            <person name="Andrews S."/>
            <person name="Isak A."/>
            <person name="Vanbrunt A."/>
            <person name="Nguyen C."/>
            <person name="Du F."/>
            <person name="Lamar B."/>
            <person name="Courtney L."/>
            <person name="Kalicki J."/>
            <person name="Ozersky P."/>
            <person name="Bielicki L."/>
            <person name="Scott K."/>
            <person name="Holmes A."/>
            <person name="Harkins R."/>
            <person name="Harris A."/>
            <person name="Strong C.M."/>
            <person name="Hou S."/>
            <person name="Tomlinson C."/>
            <person name="Dauphin-Kohlberg S."/>
            <person name="Kozlowicz-Reilly A."/>
            <person name="Leonard S."/>
            <person name="Rohlfing T."/>
            <person name="Rock S.M."/>
            <person name="Tin-Wollam A.-M."/>
            <person name="Abbott A."/>
            <person name="Minx P."/>
            <person name="Maupin R."/>
            <person name="Strowmatt C."/>
            <person name="Latreille P."/>
            <person name="Miller N."/>
            <person name="Johnson D."/>
            <person name="Murray J."/>
            <person name="Woessner J.P."/>
            <person name="Wendl M.C."/>
            <person name="Yang S.-P."/>
            <person name="Schultz B.R."/>
            <person name="Wallis J.W."/>
            <person name="Spieth J."/>
            <person name="Bieri T.A."/>
            <person name="Nelson J.O."/>
            <person name="Berkowicz N."/>
            <person name="Wohldmann P.E."/>
            <person name="Cook L.L."/>
            <person name="Hickenbotham M.T."/>
            <person name="Eldred J."/>
            <person name="Williams D."/>
            <person name="Bedell J.A."/>
            <person name="Mardis E.R."/>
            <person name="Clifton S.W."/>
            <person name="Chissoe S.L."/>
            <person name="Marra M.A."/>
            <person name="Raymond C."/>
            <person name="Haugen E."/>
            <person name="Gillett W."/>
            <person name="Zhou Y."/>
            <person name="James R."/>
            <person name="Phelps K."/>
            <person name="Iadanoto S."/>
            <person name="Bubb K."/>
            <person name="Simms E."/>
            <person name="Levy R."/>
            <person name="Clendenning J."/>
            <person name="Kaul R."/>
            <person name="Kent W.J."/>
            <person name="Furey T.S."/>
            <person name="Baertsch R.A."/>
            <person name="Brent M.R."/>
            <person name="Keibler E."/>
            <person name="Flicek P."/>
            <person name="Bork P."/>
            <person name="Suyama M."/>
            <person name="Bailey J.A."/>
            <person name="Portnoy M.E."/>
            <person name="Torrents D."/>
            <person name="Chinwalla A.T."/>
            <person name="Gish W.R."/>
            <person name="Eddy S.R."/>
            <person name="McPherson J.D."/>
            <person name="Olson M.V."/>
            <person name="Eichler E.E."/>
            <person name="Green E.D."/>
            <person name="Waterston R.H."/>
            <person name="Wilson R.K."/>
        </authorList>
    </citation>
    <scope>NUCLEOTIDE SEQUENCE [LARGE SCALE GENOMIC DNA]</scope>
</reference>
<reference key="4">
    <citation type="journal article" date="2004" name="Genome Res.">
        <title>The status, quality, and expansion of the NIH full-length cDNA project: the Mammalian Gene Collection (MGC).</title>
        <authorList>
            <consortium name="The MGC Project Team"/>
        </authorList>
    </citation>
    <scope>NUCLEOTIDE SEQUENCE [LARGE SCALE MRNA] (ISOFORM 1)</scope>
    <source>
        <tissue>Eye</tissue>
        <tissue>Lung</tissue>
        <tissue>Testis</tissue>
    </source>
</reference>
<reference key="5">
    <citation type="journal article" date="2015" name="Proteomics">
        <title>N-terminome analysis of the human mitochondrial proteome.</title>
        <authorList>
            <person name="Vaca Jacome A.S."/>
            <person name="Rabilloud T."/>
            <person name="Schaeffer-Reiss C."/>
            <person name="Rompais M."/>
            <person name="Ayoub D."/>
            <person name="Lane L."/>
            <person name="Bairoch A."/>
            <person name="Van Dorsselaer A."/>
            <person name="Carapito C."/>
        </authorList>
    </citation>
    <scope>IDENTIFICATION BY MASS SPECTROMETRY [LARGE SCALE ANALYSIS]</scope>
</reference>
<reference key="6">
    <citation type="journal article" date="2020" name="Nat. Commun.">
        <title>ABHD11 maintains 2-oxoglutarate metabolism by preserving functional lipoylation of the 2-oxoglutarate dehydrogenase complex.</title>
        <authorList>
            <person name="Bailey P.S.J."/>
            <person name="Ortmann B.M."/>
            <person name="Martinelli A.W."/>
            <person name="Houghton J.W."/>
            <person name="Costa A.S.H."/>
            <person name="Burr S.P."/>
            <person name="Antrobus R."/>
            <person name="Frezza C."/>
            <person name="Nathan J.A."/>
        </authorList>
    </citation>
    <scope>FUNCTION</scope>
    <scope>SUBCELLULAR LOCATION</scope>
    <scope>INTERACTION WITH OGDH AND DLST</scope>
    <scope>IDENTIFICATION BY MASS SPECTROMETRY</scope>
    <scope>MUTAGENESIS OF SER-132 AND HIS-287</scope>
</reference>
<reference key="7">
    <citation type="journal article" date="2020" name="PLoS ONE">
        <title>ABHD11, a new diacylglycerol lipase involved in weight gain regulation.</title>
        <authorList>
            <person name="Escoubet J."/>
            <person name="Kenigsberg M."/>
            <person name="Derock M."/>
            <person name="Yaligara V."/>
            <person name="Bock M.D."/>
            <person name="Roche S."/>
            <person name="Massey F."/>
            <person name="de Foucauld H."/>
            <person name="Bettembourg C."/>
            <person name="Olivier A."/>
            <person name="Berthemy A."/>
            <person name="Capdevielle J."/>
            <person name="Legoux R."/>
            <person name="Perret E."/>
            <person name="Buzy A."/>
            <person name="Chardenot P."/>
            <person name="Destelle V."/>
            <person name="Leroy A."/>
            <person name="Cahours C."/>
            <person name="Teixeira S."/>
            <person name="Juvet P."/>
            <person name="Gauthier P."/>
            <person name="Leguet M."/>
            <person name="Rocheteau-Beaujouan L."/>
            <person name="Chatoux M.A."/>
            <person name="Deshayes W."/>
            <person name="Clement M."/>
            <person name="Kabiri M."/>
            <person name="Orsini C."/>
            <person name="Mikol V."/>
            <person name="Didier M."/>
            <person name="Guillemot J.C."/>
        </authorList>
    </citation>
    <scope>IDENTIFICATION BY MASS SPECTROMETRY</scope>
    <scope>SUBCELLULAR LOCATION</scope>
    <scope>BIOPHYSICOCHEMICAL PROPERTIES</scope>
    <scope>CATALYTIC ACTIVITY</scope>
    <scope>FUNCTION</scope>
    <scope>TISSUE SPECIFICITY</scope>
</reference>
<keyword id="KW-0025">Alternative splicing</keyword>
<keyword id="KW-0378">Hydrolase</keyword>
<keyword id="KW-0496">Mitochondrion</keyword>
<keyword id="KW-1267">Proteomics identification</keyword>
<keyword id="KW-1185">Reference proteome</keyword>
<keyword id="KW-0809">Transit peptide</keyword>
<keyword id="KW-0856">Williams-Beuren syndrome</keyword>
<proteinExistence type="evidence at protein level"/>
<feature type="transit peptide" description="Mitochondrion" evidence="10">
    <location>
        <begin position="1"/>
        <end status="unknown"/>
    </location>
</feature>
<feature type="chain" id="PRO_0000281003" description="sn-1-specific diacylglycerol lipase ABHD11">
    <location>
        <begin status="unknown"/>
        <end position="306"/>
    </location>
</feature>
<feature type="region of interest" description="Disordered" evidence="4">
    <location>
        <begin position="19"/>
        <end position="40"/>
    </location>
</feature>
<feature type="compositionally biased region" description="Low complexity" evidence="4">
    <location>
        <begin position="23"/>
        <end position="33"/>
    </location>
</feature>
<feature type="active site" description="Charge relay system" evidence="1">
    <location>
        <position position="132"/>
    </location>
</feature>
<feature type="active site" description="Charge relay system" evidence="1">
    <location>
        <position position="228"/>
    </location>
</feature>
<feature type="active site" description="Charge relay system" evidence="1">
    <location>
        <position position="287"/>
    </location>
</feature>
<feature type="modified residue" description="N6-succinyllysine" evidence="3">
    <location>
        <position position="78"/>
    </location>
</feature>
<feature type="splice variant" id="VSP_023924" description="In isoform 4 and isoform 5." evidence="8">
    <location>
        <begin position="42"/>
        <end position="48"/>
    </location>
</feature>
<feature type="splice variant" id="VSP_023925" description="In isoform 2." evidence="8 9">
    <original>RVLTVD</original>
    <variation>ADGGCS</variation>
    <location>
        <begin position="87"/>
        <end position="92"/>
    </location>
</feature>
<feature type="splice variant" id="VSP_023926" description="In isoform 3." evidence="8">
    <original>V</original>
    <variation>G</variation>
    <location>
        <position position="88"/>
    </location>
</feature>
<feature type="splice variant" id="VSP_023927" description="In isoform 3." evidence="8">
    <location>
        <begin position="89"/>
        <end position="306"/>
    </location>
</feature>
<feature type="splice variant" id="VSP_023928" description="In isoform 2." evidence="8 9">
    <location>
        <begin position="93"/>
        <end position="306"/>
    </location>
</feature>
<feature type="splice variant" id="VSP_023929" description="In isoform 5." evidence="8">
    <original>DLLPQLGLVPCVVVGHSMGGKTAMLLAL</original>
    <variation>PAPHLGTEGLRQALCGHEVLQGWSDLRL</variation>
    <location>
        <begin position="116"/>
        <end position="143"/>
    </location>
</feature>
<feature type="splice variant" id="VSP_023930" description="In isoform 5." evidence="8">
    <location>
        <begin position="144"/>
        <end position="306"/>
    </location>
</feature>
<feature type="splice variant" id="VSP_046994" description="In isoform 6." evidence="10">
    <location>
        <begin position="146"/>
        <end position="202"/>
    </location>
</feature>
<feature type="mutagenesis site" description="Loss of p-nitrophenyl ester hydrolysis. Does not affect mitochondrion location. Loss of DLST lipoylation." evidence="7">
    <original>S</original>
    <variation>A</variation>
    <location>
        <position position="132"/>
    </location>
</feature>
<feature type="mutagenesis site" description="Loss of DLST lipoylation." evidence="7">
    <original>H</original>
    <variation>A</variation>
    <location>
        <position position="287"/>
    </location>
</feature>
<name>ABHDB_HUMAN</name>
<protein>
    <recommendedName>
        <fullName evidence="10">sn-1-specific diacylglycerol lipase ABHD11</fullName>
        <ecNumber evidence="11">3.1.1.116</ecNumber>
    </recommendedName>
    <alternativeName>
        <fullName evidence="10">Alpha/beta hydrolase domain-containing protein 11</fullName>
        <shortName evidence="12">Abhydrolase domain-containing protein 11</shortName>
    </alternativeName>
    <alternativeName>
        <fullName>Williams-Beuren syndrome chromosomal region 21 protein</fullName>
    </alternativeName>
</protein>
<dbReference type="EC" id="3.1.1.116" evidence="11"/>
<dbReference type="EMBL" id="AF412030">
    <property type="protein sequence ID" value="AAM62312.1"/>
    <property type="status" value="ALT_INIT"/>
    <property type="molecule type" value="mRNA"/>
</dbReference>
<dbReference type="EMBL" id="AF412031">
    <property type="protein sequence ID" value="AAM62313.1"/>
    <property type="status" value="ALT_INIT"/>
    <property type="molecule type" value="mRNA"/>
</dbReference>
<dbReference type="EMBL" id="AF412032">
    <property type="protein sequence ID" value="AAM62314.1"/>
    <property type="status" value="ALT_INIT"/>
    <property type="molecule type" value="mRNA"/>
</dbReference>
<dbReference type="EMBL" id="AY053499">
    <property type="protein sequence ID" value="AAL14848.1"/>
    <property type="status" value="ALT_INIT"/>
    <property type="molecule type" value="mRNA"/>
</dbReference>
<dbReference type="EMBL" id="AY053500">
    <property type="protein sequence ID" value="AAL14849.1"/>
    <property type="status" value="ALT_INIT"/>
    <property type="molecule type" value="mRNA"/>
</dbReference>
<dbReference type="EMBL" id="AC073846">
    <property type="protein sequence ID" value="AAS07472.1"/>
    <property type="status" value="ALT_SEQ"/>
    <property type="molecule type" value="Genomic_DNA"/>
</dbReference>
<dbReference type="EMBL" id="BC008251">
    <property type="protein sequence ID" value="AAH08251.2"/>
    <property type="status" value="ALT_INIT"/>
    <property type="molecule type" value="mRNA"/>
</dbReference>
<dbReference type="EMBL" id="BC011712">
    <property type="protein sequence ID" value="AAH11712.1"/>
    <property type="status" value="ALT_INIT"/>
    <property type="molecule type" value="mRNA"/>
</dbReference>
<dbReference type="EMBL" id="BC067750">
    <property type="protein sequence ID" value="AAH67750.1"/>
    <property type="status" value="ALT_INIT"/>
    <property type="molecule type" value="mRNA"/>
</dbReference>
<dbReference type="EMBL" id="AF217971">
    <property type="protein sequence ID" value="AAG17214.1"/>
    <property type="status" value="ALT_SEQ"/>
    <property type="molecule type" value="mRNA"/>
</dbReference>
<dbReference type="CCDS" id="CCDS47607.2">
    <molecule id="Q8NFV4-6"/>
</dbReference>
<dbReference type="CCDS" id="CCDS47608.2">
    <molecule id="Q8NFV4-4"/>
</dbReference>
<dbReference type="CCDS" id="CCDS5558.2">
    <molecule id="Q8NFV4-1"/>
</dbReference>
<dbReference type="RefSeq" id="NP_001138836.2">
    <molecule id="Q8NFV4-6"/>
    <property type="nucleotide sequence ID" value="NM_001145364.3"/>
</dbReference>
<dbReference type="RefSeq" id="NP_001287987.1">
    <property type="nucleotide sequence ID" value="NM_001301058.1"/>
</dbReference>
<dbReference type="RefSeq" id="NP_001308311.1">
    <property type="nucleotide sequence ID" value="NM_001321382.1"/>
</dbReference>
<dbReference type="RefSeq" id="NP_683710.2">
    <molecule id="Q8NFV4-1"/>
    <property type="nucleotide sequence ID" value="NM_148912.4"/>
</dbReference>
<dbReference type="RefSeq" id="NP_683711.2">
    <molecule id="Q8NFV4-4"/>
    <property type="nucleotide sequence ID" value="NM_148913.4"/>
</dbReference>
<dbReference type="SMR" id="Q8NFV4"/>
<dbReference type="BioGRID" id="123653">
    <property type="interactions" value="91"/>
</dbReference>
<dbReference type="FunCoup" id="Q8NFV4">
    <property type="interactions" value="875"/>
</dbReference>
<dbReference type="IntAct" id="Q8NFV4">
    <property type="interactions" value="54"/>
</dbReference>
<dbReference type="MINT" id="Q8NFV4"/>
<dbReference type="STRING" id="9606.ENSP00000222800"/>
<dbReference type="BindingDB" id="Q8NFV4"/>
<dbReference type="ChEMBL" id="CHEMBL2189134"/>
<dbReference type="ESTHER" id="human-ABHD11">
    <property type="family name" value="ABHD11-Acetyl_transferase"/>
</dbReference>
<dbReference type="MEROPS" id="S33.976"/>
<dbReference type="GlyGen" id="Q8NFV4">
    <property type="glycosylation" value="1 site, 1 O-linked glycan (1 site)"/>
</dbReference>
<dbReference type="PhosphoSitePlus" id="Q8NFV4"/>
<dbReference type="SwissPalm" id="Q8NFV4"/>
<dbReference type="BioMuta" id="ABHD11"/>
<dbReference type="DMDM" id="74751292"/>
<dbReference type="jPOST" id="Q8NFV4"/>
<dbReference type="MassIVE" id="Q8NFV4"/>
<dbReference type="PaxDb" id="9606-ENSP00000222800"/>
<dbReference type="PeptideAtlas" id="Q8NFV4"/>
<dbReference type="ProteomicsDB" id="43672"/>
<dbReference type="ProteomicsDB" id="73364">
    <molecule id="Q8NFV4-1"/>
</dbReference>
<dbReference type="ProteomicsDB" id="73365">
    <molecule id="Q8NFV4-2"/>
</dbReference>
<dbReference type="ProteomicsDB" id="73366">
    <molecule id="Q8NFV4-3"/>
</dbReference>
<dbReference type="ProteomicsDB" id="73367">
    <molecule id="Q8NFV4-4"/>
</dbReference>
<dbReference type="ProteomicsDB" id="73368">
    <molecule id="Q8NFV4-5"/>
</dbReference>
<dbReference type="Pumba" id="Q8NFV4"/>
<dbReference type="TopDownProteomics" id="Q8NFV4-1">
    <molecule id="Q8NFV4-1"/>
</dbReference>
<dbReference type="Antibodypedia" id="14446">
    <property type="antibodies" value="133 antibodies from 24 providers"/>
</dbReference>
<dbReference type="DNASU" id="83451"/>
<dbReference type="Ensembl" id="ENST00000222800.8">
    <molecule id="Q8NFV4-1"/>
    <property type="protein sequence ID" value="ENSP00000222800.4"/>
    <property type="gene ID" value="ENSG00000106077.19"/>
</dbReference>
<dbReference type="Ensembl" id="ENST00000357419.9">
    <molecule id="Q8NFV4-2"/>
    <property type="protein sequence ID" value="ENSP00000392945.3"/>
    <property type="gene ID" value="ENSG00000106077.19"/>
</dbReference>
<dbReference type="Ensembl" id="ENST00000395147.9">
    <molecule id="Q8NFV4-6"/>
    <property type="protein sequence ID" value="ENSP00000378579.5"/>
    <property type="gene ID" value="ENSG00000106077.19"/>
</dbReference>
<dbReference type="Ensembl" id="ENST00000437775.7">
    <molecule id="Q8NFV4-4"/>
    <property type="protein sequence ID" value="ENSP00000416970.3"/>
    <property type="gene ID" value="ENSG00000106077.19"/>
</dbReference>
<dbReference type="GeneID" id="83451"/>
<dbReference type="KEGG" id="hsa:83451"/>
<dbReference type="MANE-Select" id="ENST00000222800.8">
    <property type="protein sequence ID" value="ENSP00000222800.4"/>
    <property type="RefSeq nucleotide sequence ID" value="NM_148912.4"/>
    <property type="RefSeq protein sequence ID" value="NP_683710.2"/>
</dbReference>
<dbReference type="UCSC" id="uc003tzb.4">
    <molecule id="Q8NFV4-1"/>
    <property type="organism name" value="human"/>
</dbReference>
<dbReference type="AGR" id="HGNC:16407"/>
<dbReference type="CTD" id="83451"/>
<dbReference type="DisGeNET" id="83451"/>
<dbReference type="GeneCards" id="ABHD11"/>
<dbReference type="HGNC" id="HGNC:16407">
    <property type="gene designation" value="ABHD11"/>
</dbReference>
<dbReference type="HPA" id="ENSG00000106077">
    <property type="expression patterns" value="Low tissue specificity"/>
</dbReference>
<dbReference type="MalaCards" id="ABHD11"/>
<dbReference type="MIM" id="621050">
    <property type="type" value="gene"/>
</dbReference>
<dbReference type="neXtProt" id="NX_Q8NFV4"/>
<dbReference type="OpenTargets" id="ENSG00000106077"/>
<dbReference type="PharmGKB" id="PA38134"/>
<dbReference type="VEuPathDB" id="HostDB:ENSG00000106077"/>
<dbReference type="eggNOG" id="KOG2382">
    <property type="taxonomic scope" value="Eukaryota"/>
</dbReference>
<dbReference type="GeneTree" id="ENSGT00390000015880"/>
<dbReference type="HOGENOM" id="CLU_020336_53_0_1"/>
<dbReference type="InParanoid" id="Q8NFV4"/>
<dbReference type="OrthoDB" id="8119704at2759"/>
<dbReference type="PAN-GO" id="Q8NFV4">
    <property type="GO annotations" value="3 GO annotations based on evolutionary models"/>
</dbReference>
<dbReference type="PhylomeDB" id="Q8NFV4"/>
<dbReference type="TreeFam" id="TF314071"/>
<dbReference type="PathwayCommons" id="Q8NFV4"/>
<dbReference type="SignaLink" id="Q8NFV4"/>
<dbReference type="BioGRID-ORCS" id="83451">
    <property type="hits" value="255 hits in 1156 CRISPR screens"/>
</dbReference>
<dbReference type="ChiTaRS" id="ABHD11">
    <property type="organism name" value="human"/>
</dbReference>
<dbReference type="GeneWiki" id="ABHD11"/>
<dbReference type="GenomeRNAi" id="83451"/>
<dbReference type="Pharos" id="Q8NFV4">
    <property type="development level" value="Tbio"/>
</dbReference>
<dbReference type="PRO" id="PR:Q8NFV4"/>
<dbReference type="Proteomes" id="UP000005640">
    <property type="component" value="Chromosome 7"/>
</dbReference>
<dbReference type="RNAct" id="Q8NFV4">
    <property type="molecule type" value="protein"/>
</dbReference>
<dbReference type="Bgee" id="ENSG00000106077">
    <property type="expression patterns" value="Expressed in mucosa of transverse colon and 200 other cell types or tissues"/>
</dbReference>
<dbReference type="ExpressionAtlas" id="Q8NFV4">
    <property type="expression patterns" value="baseline and differential"/>
</dbReference>
<dbReference type="GO" id="GO:0005759">
    <property type="term" value="C:mitochondrial matrix"/>
    <property type="evidence" value="ECO:0000314"/>
    <property type="project" value="UniProtKB"/>
</dbReference>
<dbReference type="GO" id="GO:0005739">
    <property type="term" value="C:mitochondrion"/>
    <property type="evidence" value="ECO:0000314"/>
    <property type="project" value="UniProtKB"/>
</dbReference>
<dbReference type="GO" id="GO:0045252">
    <property type="term" value="C:oxoglutarate dehydrogenase complex"/>
    <property type="evidence" value="ECO:0000314"/>
    <property type="project" value="UniProtKB"/>
</dbReference>
<dbReference type="GO" id="GO:0052689">
    <property type="term" value="F:carboxylic ester hydrolase activity"/>
    <property type="evidence" value="ECO:0000318"/>
    <property type="project" value="GO_Central"/>
</dbReference>
<dbReference type="GO" id="GO:0016298">
    <property type="term" value="F:lipase activity"/>
    <property type="evidence" value="ECO:0000314"/>
    <property type="project" value="UniProtKB"/>
</dbReference>
<dbReference type="GO" id="GO:0006629">
    <property type="term" value="P:lipid metabolic process"/>
    <property type="evidence" value="ECO:0000318"/>
    <property type="project" value="GO_Central"/>
</dbReference>
<dbReference type="FunFam" id="3.40.50.1820:FF:000039">
    <property type="entry name" value="Esterase ybfF"/>
    <property type="match status" value="1"/>
</dbReference>
<dbReference type="Gene3D" id="3.40.50.1820">
    <property type="entry name" value="alpha/beta hydrolase"/>
    <property type="match status" value="1"/>
</dbReference>
<dbReference type="InterPro" id="IPR000073">
    <property type="entry name" value="AB_hydrolase_1"/>
</dbReference>
<dbReference type="InterPro" id="IPR029058">
    <property type="entry name" value="AB_hydrolase_fold"/>
</dbReference>
<dbReference type="PANTHER" id="PTHR46118">
    <property type="entry name" value="PROTEIN ABHD11"/>
    <property type="match status" value="1"/>
</dbReference>
<dbReference type="PANTHER" id="PTHR46118:SF4">
    <property type="entry name" value="PROTEIN ABHD11"/>
    <property type="match status" value="1"/>
</dbReference>
<dbReference type="Pfam" id="PF00561">
    <property type="entry name" value="Abhydrolase_1"/>
    <property type="match status" value="1"/>
</dbReference>
<dbReference type="PRINTS" id="PR00111">
    <property type="entry name" value="ABHYDROLASE"/>
</dbReference>
<dbReference type="SUPFAM" id="SSF53474">
    <property type="entry name" value="alpha/beta-Hydrolases"/>
    <property type="match status" value="1"/>
</dbReference>
<accession>Q8NFV4</accession>
<accession>H7BYM8</accession>
<accession>Q6PJU0</accession>
<accession>Q8N722</accession>
<accession>Q8N723</accession>
<accession>Q8NFV2</accession>
<accession>Q8NFV3</accession>
<accession>Q9HBS8</accession>
<evidence type="ECO:0000250" key="1"/>
<evidence type="ECO:0000250" key="2">
    <source>
        <dbReference type="UniProtKB" id="Q3SZ73"/>
    </source>
</evidence>
<evidence type="ECO:0000250" key="3">
    <source>
        <dbReference type="UniProtKB" id="Q8K4F5"/>
    </source>
</evidence>
<evidence type="ECO:0000256" key="4">
    <source>
        <dbReference type="SAM" id="MobiDB-lite"/>
    </source>
</evidence>
<evidence type="ECO:0000269" key="5">
    <source>
    </source>
</evidence>
<evidence type="ECO:0000269" key="6">
    <source>
    </source>
</evidence>
<evidence type="ECO:0000269" key="7">
    <source>
    </source>
</evidence>
<evidence type="ECO:0000303" key="8">
    <source>
    </source>
</evidence>
<evidence type="ECO:0000303" key="9">
    <source>
    </source>
</evidence>
<evidence type="ECO:0000305" key="10"/>
<evidence type="ECO:0000305" key="11">
    <source>
    </source>
</evidence>
<evidence type="ECO:0000312" key="12">
    <source>
        <dbReference type="HGNC" id="HGNC:16407"/>
    </source>
</evidence>
<comment type="function">
    <text evidence="2 3 6 7">Catalyzes the hydrolysis of diacylglycerol in vitro and may function as a key regulator in lipid metabolism, namely by regulating the intracellular levels of diacylglycerol (PubMed:32579589). 1,2-diacyl-sn-glycerols are the preferred substrate over 1,3-diacyl-sn-glycerols (By similarity). The enzyme hydrolyzes stearate in preference to palmitate from the sn-1 position of 1,2-diacyl-sn-glycerols (By similarity). Maintains the functional lipoylation of the 2-oxoglutarate dehydrogenase complex (OGDHc) through its interaction with the OGDHc by preventing the formation of lipoyl adducts (PubMed:32792488). In addition, is also required for the expansion and differentiation of embryonic stem cells (ESCs) (By similarity).</text>
</comment>
<comment type="catalytic activity">
    <reaction evidence="11">
        <text>1-octadecanoyl-2-(5Z,8Z,11Z,14Z-eicosatetraenoyl)-sn-glycerol + H2O = 2-(5Z,8Z,11Z,14Z-eicosatetraenoyl)-glycerol + octadecanoate + H(+)</text>
        <dbReference type="Rhea" id="RHEA:38507"/>
        <dbReference type="ChEBI" id="CHEBI:15377"/>
        <dbReference type="ChEBI" id="CHEBI:15378"/>
        <dbReference type="ChEBI" id="CHEBI:25629"/>
        <dbReference type="ChEBI" id="CHEBI:52392"/>
        <dbReference type="ChEBI" id="CHEBI:75728"/>
    </reaction>
</comment>
<comment type="catalytic activity">
    <reaction evidence="11">
        <text>a 1,2-diacyl-sn-glycerol + H2O = a 2-acylglycerol + a fatty acid + H(+)</text>
        <dbReference type="Rhea" id="RHEA:33275"/>
        <dbReference type="ChEBI" id="CHEBI:15377"/>
        <dbReference type="ChEBI" id="CHEBI:15378"/>
        <dbReference type="ChEBI" id="CHEBI:17389"/>
        <dbReference type="ChEBI" id="CHEBI:17815"/>
        <dbReference type="ChEBI" id="CHEBI:28868"/>
        <dbReference type="EC" id="3.1.1.116"/>
    </reaction>
</comment>
<comment type="catalytic activity">
    <reaction evidence="2">
        <text>a 1,3-diacyl-sn-glycerol + H2O = a 1-acyl-sn-glycerol + a fatty acid + H(+)</text>
        <dbReference type="Rhea" id="RHEA:38503"/>
        <dbReference type="ChEBI" id="CHEBI:15377"/>
        <dbReference type="ChEBI" id="CHEBI:15378"/>
        <dbReference type="ChEBI" id="CHEBI:28868"/>
        <dbReference type="ChEBI" id="CHEBI:64683"/>
        <dbReference type="ChEBI" id="CHEBI:77272"/>
    </reaction>
</comment>
<comment type="catalytic activity">
    <reaction evidence="2">
        <text>1-octadecanoyl-2-(9Z-octadecenoyl)-sn-glycerol + H2O = 2-(9Z-octadecenoyl)-glycerol + octadecanoate + H(+)</text>
        <dbReference type="Rhea" id="RHEA:77103"/>
        <dbReference type="ChEBI" id="CHEBI:15377"/>
        <dbReference type="ChEBI" id="CHEBI:15378"/>
        <dbReference type="ChEBI" id="CHEBI:25629"/>
        <dbReference type="ChEBI" id="CHEBI:73990"/>
        <dbReference type="ChEBI" id="CHEBI:75468"/>
    </reaction>
</comment>
<comment type="catalytic activity">
    <reaction evidence="2">
        <text>1-octadecanoyl-2-(4Z,7Z,10Z,13Z,16Z,19Z-docosahexaenoyl)-sn-glycerol + H2O = 2-(4Z,7Z,10Z,13Z,16Z,19Z-docosahexaenoyl)-glycerol + octadecanoate + H(+)</text>
        <dbReference type="Rhea" id="RHEA:77107"/>
        <dbReference type="ChEBI" id="CHEBI:15377"/>
        <dbReference type="ChEBI" id="CHEBI:15378"/>
        <dbReference type="ChEBI" id="CHEBI:25629"/>
        <dbReference type="ChEBI" id="CHEBI:77129"/>
        <dbReference type="ChEBI" id="CHEBI:186738"/>
    </reaction>
</comment>
<comment type="catalytic activity">
    <reaction evidence="2">
        <text>1,2-didecanoylglycerol + H2O = decanoylglycerol + decanoate + H(+)</text>
        <dbReference type="Rhea" id="RHEA:48596"/>
        <dbReference type="ChEBI" id="CHEBI:11152"/>
        <dbReference type="ChEBI" id="CHEBI:15377"/>
        <dbReference type="ChEBI" id="CHEBI:15378"/>
        <dbReference type="ChEBI" id="CHEBI:27689"/>
        <dbReference type="ChEBI" id="CHEBI:90605"/>
    </reaction>
</comment>
<comment type="biophysicochemical properties">
    <kinetics>
        <KM evidence="6">18.6 uM for 1-octadecanoyl-2-(5Z,8Z,11Z,14Z-eicosatetraenoyl)-sn-glycerol</KM>
        <Vmax evidence="6">2600.0 nmol/min/mg enzyme toward 1-octadecanoyl-2-(5Z,8Z,11Z,14Z-eicosatetraenoyl)-sn-glycerol</Vmax>
    </kinetics>
</comment>
<comment type="subunit">
    <text evidence="7">Interacts with OGDH and DLST; this interaction maintains the functional lipoylation of the 2-oxoglutarate dehydrogenase complex.</text>
</comment>
<comment type="interaction">
    <interactant intactId="EBI-12318443">
        <id>Q8NFV4-4</id>
    </interactant>
    <interactant intactId="EBI-17183751">
        <id>X5D778</id>
        <label>ANKRD11</label>
    </interactant>
    <organismsDiffer>false</organismsDiffer>
    <experiments>3</experiments>
</comment>
<comment type="interaction">
    <interactant intactId="EBI-12318443">
        <id>Q8NFV4-4</id>
    </interactant>
    <interactant intactId="EBI-711360">
        <id>P33240</id>
        <label>CSTF2</label>
    </interactant>
    <organismsDiffer>false</organismsDiffer>
    <experiments>3</experiments>
</comment>
<comment type="interaction">
    <interactant intactId="EBI-12318443">
        <id>Q8NFV4-4</id>
    </interactant>
    <interactant intactId="EBI-2880244">
        <id>Q6PKX4</id>
        <label>DOK6</label>
    </interactant>
    <organismsDiffer>false</organismsDiffer>
    <experiments>3</experiments>
</comment>
<comment type="interaction">
    <interactant intactId="EBI-12318443">
        <id>Q8NFV4-4</id>
    </interactant>
    <interactant intactId="EBI-740376">
        <id>Q86UW9</id>
        <label>DTX2</label>
    </interactant>
    <organismsDiffer>false</organismsDiffer>
    <experiments>3</experiments>
</comment>
<comment type="interaction">
    <interactant intactId="EBI-12318443">
        <id>Q8NFV4-4</id>
    </interactant>
    <interactant intactId="EBI-10242151">
        <id>Q53EP0-3</id>
        <label>FNDC3B</label>
    </interactant>
    <organismsDiffer>false</organismsDiffer>
    <experiments>3</experiments>
</comment>
<comment type="interaction">
    <interactant intactId="EBI-12318443">
        <id>Q8NFV4-4</id>
    </interactant>
    <interactant intactId="EBI-947242">
        <id>P28676</id>
        <label>GCA</label>
    </interactant>
    <organismsDiffer>false</organismsDiffer>
    <experiments>3</experiments>
</comment>
<comment type="interaction">
    <interactant intactId="EBI-12318443">
        <id>Q8NFV4-4</id>
    </interactant>
    <interactant intactId="EBI-2880706">
        <id>O43593</id>
        <label>HR</label>
    </interactant>
    <organismsDiffer>false</organismsDiffer>
    <experiments>3</experiments>
</comment>
<comment type="interaction">
    <interactant intactId="EBI-12318443">
        <id>Q8NFV4-4</id>
    </interactant>
    <interactant intactId="EBI-724076">
        <id>Q99750</id>
        <label>MDFI</label>
    </interactant>
    <organismsDiffer>false</organismsDiffer>
    <experiments>3</experiments>
</comment>
<comment type="interaction">
    <interactant intactId="EBI-12318443">
        <id>Q8NFV4-4</id>
    </interactant>
    <interactant intactId="EBI-9675802">
        <id>Q6PF18</id>
        <label>MORN3</label>
    </interactant>
    <organismsDiffer>false</organismsDiffer>
    <experiments>3</experiments>
</comment>
<comment type="interaction">
    <interactant intactId="EBI-12318443">
        <id>Q8NFV4-4</id>
    </interactant>
    <interactant intactId="EBI-11022007">
        <id>Q9HBE1-4</id>
        <label>PATZ1</label>
    </interactant>
    <organismsDiffer>false</organismsDiffer>
    <experiments>3</experiments>
</comment>
<comment type="interaction">
    <interactant intactId="EBI-12318443">
        <id>Q8NFV4-4</id>
    </interactant>
    <interactant intactId="EBI-748265">
        <id>P78337</id>
        <label>PITX1</label>
    </interactant>
    <organismsDiffer>false</organismsDiffer>
    <experiments>3</experiments>
</comment>
<comment type="interaction">
    <interactant intactId="EBI-12318443">
        <id>Q8NFV4-4</id>
    </interactant>
    <interactant intactId="EBI-1053424">
        <id>O43741</id>
        <label>PRKAB2</label>
    </interactant>
    <organismsDiffer>false</organismsDiffer>
    <experiments>3</experiments>
</comment>
<comment type="interaction">
    <interactant intactId="EBI-12318443">
        <id>Q8NFV4-4</id>
    </interactant>
    <interactant intactId="EBI-9027467">
        <id>O75360</id>
        <label>PROP1</label>
    </interactant>
    <organismsDiffer>false</organismsDiffer>
    <experiments>3</experiments>
</comment>
<comment type="interaction">
    <interactant intactId="EBI-12318443">
        <id>Q8NFV4-4</id>
    </interactant>
    <interactant intactId="EBI-11986293">
        <id>P0CG20</id>
        <label>PRR35</label>
    </interactant>
    <organismsDiffer>false</organismsDiffer>
    <experiments>3</experiments>
</comment>
<comment type="interaction">
    <interactant intactId="EBI-12318443">
        <id>Q8NFV4-4</id>
    </interactant>
    <interactant intactId="EBI-6257312">
        <id>Q9BVN2</id>
        <label>RUSC1</label>
    </interactant>
    <organismsDiffer>false</organismsDiffer>
    <experiments>3</experiments>
</comment>
<comment type="interaction">
    <interactant intactId="EBI-12318443">
        <id>Q8NFV4-4</id>
    </interactant>
    <interactant intactId="EBI-739895">
        <id>Q8N6Y0</id>
        <label>USHBP1</label>
    </interactant>
    <organismsDiffer>false</organismsDiffer>
    <experiments>3</experiments>
</comment>
<comment type="interaction">
    <interactant intactId="EBI-12318443">
        <id>Q8NFV4-4</id>
    </interactant>
    <interactant intactId="EBI-2107455">
        <id>Q08AM6</id>
        <label>VAC14</label>
    </interactant>
    <organismsDiffer>false</organismsDiffer>
    <experiments>3</experiments>
</comment>
<comment type="interaction">
    <interactant intactId="EBI-12318443">
        <id>Q8NFV4-4</id>
    </interactant>
    <interactant intactId="EBI-10191303">
        <id>O95231</id>
        <label>VENTX</label>
    </interactant>
    <organismsDiffer>false</organismsDiffer>
    <experiments>3</experiments>
</comment>
<comment type="interaction">
    <interactant intactId="EBI-12318443">
        <id>Q8NFV4-4</id>
    </interactant>
    <interactant intactId="EBI-2559305">
        <id>A5D8V6</id>
        <label>VPS37C</label>
    </interactant>
    <organismsDiffer>false</organismsDiffer>
    <experiments>3</experiments>
</comment>
<comment type="interaction">
    <interactant intactId="EBI-12318443">
        <id>Q8NFV4-4</id>
    </interactant>
    <interactant intactId="EBI-12040603">
        <id>Q9NZC7-5</id>
        <label>WWOX</label>
    </interactant>
    <organismsDiffer>false</organismsDiffer>
    <experiments>3</experiments>
</comment>
<comment type="interaction">
    <interactant intactId="EBI-12318443">
        <id>Q8NFV4-4</id>
    </interactant>
    <interactant intactId="EBI-1051237">
        <id>Q9BYJ9</id>
        <label>YTHDF1</label>
    </interactant>
    <organismsDiffer>false</organismsDiffer>
    <experiments>3</experiments>
</comment>
<comment type="interaction">
    <interactant intactId="EBI-12318443">
        <id>Q8NFV4-4</id>
    </interactant>
    <interactant intactId="EBI-11963196">
        <id>Q15915</id>
        <label>ZIC1</label>
    </interactant>
    <organismsDiffer>false</organismsDiffer>
    <experiments>3</experiments>
</comment>
<comment type="subcellular location">
    <subcellularLocation>
        <location evidence="6">Mitochondrion</location>
    </subcellularLocation>
    <subcellularLocation>
        <location evidence="7">Mitochondrion matrix</location>
    </subcellularLocation>
</comment>
<comment type="alternative products">
    <event type="alternative splicing"/>
    <isoform>
        <id>Q8NFV4-1</id>
        <name>1</name>
        <name>A</name>
        <sequence type="displayed"/>
    </isoform>
    <isoform>
        <id>Q8NFV4-2</id>
        <name>2</name>
        <name>B</name>
        <sequence type="described" ref="VSP_023925 VSP_023928"/>
    </isoform>
    <isoform>
        <id>Q8NFV4-3</id>
        <name>3</name>
        <name>C</name>
        <sequence type="described" ref="VSP_023926 VSP_023927"/>
    </isoform>
    <isoform>
        <id>Q8NFV4-4</id>
        <name>4</name>
        <name>D</name>
        <sequence type="described" ref="VSP_023924"/>
    </isoform>
    <isoform>
        <id>Q8NFV4-5</id>
        <name>5</name>
        <name>E</name>
        <sequence type="described" ref="VSP_023924 VSP_023929 VSP_023930"/>
    </isoform>
    <isoform>
        <id>Q8NFV4-6</id>
        <name>6</name>
        <sequence type="described" ref="VSP_046994"/>
    </isoform>
</comment>
<comment type="tissue specificity">
    <text evidence="5 6">Ubiquitously expressed (PubMed:12073013). Highly expressed in small intestine, prostate and thyroid, while aorta and colon tissues exhibit weak expression levels (PubMed:32579589).</text>
</comment>
<comment type="PTM">
    <text evidence="2">Phosphorylated.</text>
</comment>
<comment type="disease">
    <text>ABHD11 is located in the Williams-Beuren syndrome (WBS) critical region. WBS results from a hemizygous deletion of several genes on chromosome 7q11.23, thought to arise as a consequence of unequal crossing over between highly homologous low-copy repeat sequences flanking the deleted region.</text>
</comment>
<comment type="miscellaneous">
    <molecule>Isoform 2</molecule>
    <text evidence="10">May be produced at very low levels due to a premature stop codon in the mRNA, leading to nonsense-mediated mRNA decay.</text>
</comment>
<comment type="miscellaneous">
    <molecule>Isoform 3</molecule>
    <text evidence="10">May be produced at very low levels due to a premature stop codon in the mRNA, leading to nonsense-mediated mRNA decay.</text>
</comment>
<comment type="similarity">
    <text evidence="10">Belongs to the AB hydrolase superfamily.</text>
</comment>
<comment type="sequence caution" evidence="10">
    <conflict type="erroneous translation">
        <sequence resource="EMBL-CDS" id="AAG17214"/>
    </conflict>
    <text>Wrong choice of CDS.</text>
</comment>
<comment type="sequence caution" evidence="10">
    <conflict type="erroneous initiation">
        <sequence resource="EMBL-CDS" id="AAH08251"/>
    </conflict>
    <text>Extended N-terminus.</text>
</comment>
<comment type="sequence caution" evidence="10">
    <conflict type="erroneous initiation">
        <sequence resource="EMBL-CDS" id="AAH11712"/>
    </conflict>
    <text>Extended N-terminus.</text>
</comment>
<comment type="sequence caution" evidence="10">
    <conflict type="erroneous initiation">
        <sequence resource="EMBL-CDS" id="AAH67750"/>
    </conflict>
    <text>Extended N-terminus.</text>
</comment>
<comment type="sequence caution" evidence="10">
    <conflict type="erroneous initiation">
        <sequence resource="EMBL-CDS" id="AAL14848"/>
    </conflict>
    <text>Extended N-terminus.</text>
</comment>
<comment type="sequence caution" evidence="10">
    <conflict type="erroneous initiation">
        <sequence resource="EMBL-CDS" id="AAL14849"/>
    </conflict>
    <text>Extended N-terminus.</text>
</comment>
<comment type="sequence caution" evidence="10">
    <conflict type="erroneous initiation">
        <sequence resource="EMBL-CDS" id="AAM62312"/>
    </conflict>
    <text>Extended N-terminus.</text>
</comment>
<comment type="sequence caution" evidence="10">
    <conflict type="erroneous initiation">
        <sequence resource="EMBL-CDS" id="AAM62313"/>
    </conflict>
    <text>Extended N-terminus.</text>
</comment>
<comment type="sequence caution" evidence="10">
    <conflict type="erroneous initiation">
        <sequence resource="EMBL-CDS" id="AAM62314"/>
    </conflict>
    <text>Extended N-terminus.</text>
</comment>
<comment type="sequence caution" evidence="10">
    <conflict type="erroneous gene model prediction">
        <sequence resource="EMBL-CDS" id="AAS07472"/>
    </conflict>
</comment>
<organism>
    <name type="scientific">Homo sapiens</name>
    <name type="common">Human</name>
    <dbReference type="NCBI Taxonomy" id="9606"/>
    <lineage>
        <taxon>Eukaryota</taxon>
        <taxon>Metazoa</taxon>
        <taxon>Chordata</taxon>
        <taxon>Craniata</taxon>
        <taxon>Vertebrata</taxon>
        <taxon>Euteleostomi</taxon>
        <taxon>Mammalia</taxon>
        <taxon>Eutheria</taxon>
        <taxon>Euarchontoglires</taxon>
        <taxon>Primates</taxon>
        <taxon>Haplorrhini</taxon>
        <taxon>Catarrhini</taxon>
        <taxon>Hominidae</taxon>
        <taxon>Homo</taxon>
    </lineage>
</organism>
<sequence>MLRWTRAWRLPREGLGPHGPSFARVPVAPSSSSGGRGGAEPRPLPLSYRLLDGEAALPAVVFLHGLFGSKTNFNSIAKILAQQTGRRVLTVDARNHGDSPHSPDMSYEIMSQDLQDLLPQLGLVPCVVVGHSMGGKTAMLLALQRPELVERLIAVDISPVESTGVSHFATYVAAMRAINIADELPRSRARKLADEQLSSVIQDMAVRQHLLTNLVEVDGRFVWRVNLDALTQHLDKILAFPQRQESYLGPTLFLLGGNSQFVHPSHHPEIMRLFPRAQMQTVPNAGHWIHADRPQDFIAAIRGFLV</sequence>
<gene>
    <name evidence="12" type="primary">ABHD11</name>
    <name type="synonym">WBSCR21</name>
    <name type="ORF">PP1226</name>
</gene>